<accession>Q5PKA6</accession>
<keyword id="KW-0004">4Fe-4S</keyword>
<keyword id="KW-0408">Iron</keyword>
<keyword id="KW-0411">Iron-sulfur</keyword>
<keyword id="KW-0456">Lyase</keyword>
<keyword id="KW-0479">Metal-binding</keyword>
<keyword id="KW-0949">S-adenosyl-L-methionine</keyword>
<keyword id="KW-0784">Thiamine biosynthesis</keyword>
<keyword id="KW-0862">Zinc</keyword>
<protein>
    <recommendedName>
        <fullName evidence="1">Phosphomethylpyrimidine synthase</fullName>
        <ecNumber evidence="1">4.1.99.17</ecNumber>
    </recommendedName>
    <alternativeName>
        <fullName evidence="1">Hydroxymethylpyrimidine phosphate synthase</fullName>
        <shortName evidence="1">HMP-P synthase</shortName>
        <shortName evidence="1">HMP-phosphate synthase</shortName>
        <shortName evidence="1">HMPP synthase</shortName>
    </alternativeName>
    <alternativeName>
        <fullName evidence="1">Thiamine biosynthesis protein ThiC</fullName>
    </alternativeName>
</protein>
<evidence type="ECO:0000255" key="1">
    <source>
        <dbReference type="HAMAP-Rule" id="MF_00089"/>
    </source>
</evidence>
<dbReference type="EC" id="4.1.99.17" evidence="1"/>
<dbReference type="EMBL" id="CP000026">
    <property type="protein sequence ID" value="AAV79753.1"/>
    <property type="molecule type" value="Genomic_DNA"/>
</dbReference>
<dbReference type="RefSeq" id="WP_000108407.1">
    <property type="nucleotide sequence ID" value="NC_006511.1"/>
</dbReference>
<dbReference type="SMR" id="Q5PKA6"/>
<dbReference type="KEGG" id="spt:SPA4001"/>
<dbReference type="HOGENOM" id="CLU_013181_2_1_6"/>
<dbReference type="UniPathway" id="UPA00060"/>
<dbReference type="Proteomes" id="UP000008185">
    <property type="component" value="Chromosome"/>
</dbReference>
<dbReference type="GO" id="GO:0005829">
    <property type="term" value="C:cytosol"/>
    <property type="evidence" value="ECO:0007669"/>
    <property type="project" value="TreeGrafter"/>
</dbReference>
<dbReference type="GO" id="GO:0051539">
    <property type="term" value="F:4 iron, 4 sulfur cluster binding"/>
    <property type="evidence" value="ECO:0007669"/>
    <property type="project" value="UniProtKB-KW"/>
</dbReference>
<dbReference type="GO" id="GO:0016830">
    <property type="term" value="F:carbon-carbon lyase activity"/>
    <property type="evidence" value="ECO:0007669"/>
    <property type="project" value="InterPro"/>
</dbReference>
<dbReference type="GO" id="GO:0008270">
    <property type="term" value="F:zinc ion binding"/>
    <property type="evidence" value="ECO:0007669"/>
    <property type="project" value="UniProtKB-UniRule"/>
</dbReference>
<dbReference type="GO" id="GO:0009228">
    <property type="term" value="P:thiamine biosynthetic process"/>
    <property type="evidence" value="ECO:0007669"/>
    <property type="project" value="UniProtKB-KW"/>
</dbReference>
<dbReference type="GO" id="GO:0009229">
    <property type="term" value="P:thiamine diphosphate biosynthetic process"/>
    <property type="evidence" value="ECO:0007669"/>
    <property type="project" value="UniProtKB-UniRule"/>
</dbReference>
<dbReference type="FunFam" id="3.20.20.540:FF:000001">
    <property type="entry name" value="Phosphomethylpyrimidine synthase"/>
    <property type="match status" value="1"/>
</dbReference>
<dbReference type="Gene3D" id="6.10.250.620">
    <property type="match status" value="1"/>
</dbReference>
<dbReference type="Gene3D" id="3.20.20.540">
    <property type="entry name" value="Radical SAM ThiC family, central domain"/>
    <property type="match status" value="1"/>
</dbReference>
<dbReference type="HAMAP" id="MF_00089">
    <property type="entry name" value="ThiC"/>
    <property type="match status" value="1"/>
</dbReference>
<dbReference type="InterPro" id="IPR037509">
    <property type="entry name" value="ThiC"/>
</dbReference>
<dbReference type="InterPro" id="IPR025747">
    <property type="entry name" value="ThiC-associated_dom"/>
</dbReference>
<dbReference type="InterPro" id="IPR038521">
    <property type="entry name" value="ThiC/Bza_core_dom"/>
</dbReference>
<dbReference type="InterPro" id="IPR002817">
    <property type="entry name" value="ThiC/BzaA/B"/>
</dbReference>
<dbReference type="NCBIfam" id="NF006763">
    <property type="entry name" value="PRK09284.1"/>
    <property type="match status" value="1"/>
</dbReference>
<dbReference type="NCBIfam" id="NF009895">
    <property type="entry name" value="PRK13352.1"/>
    <property type="match status" value="1"/>
</dbReference>
<dbReference type="NCBIfam" id="TIGR00190">
    <property type="entry name" value="thiC"/>
    <property type="match status" value="1"/>
</dbReference>
<dbReference type="PANTHER" id="PTHR30557:SF1">
    <property type="entry name" value="PHOSPHOMETHYLPYRIMIDINE SYNTHASE, CHLOROPLASTIC"/>
    <property type="match status" value="1"/>
</dbReference>
<dbReference type="PANTHER" id="PTHR30557">
    <property type="entry name" value="THIAMINE BIOSYNTHESIS PROTEIN THIC"/>
    <property type="match status" value="1"/>
</dbReference>
<dbReference type="Pfam" id="PF13667">
    <property type="entry name" value="ThiC-associated"/>
    <property type="match status" value="1"/>
</dbReference>
<dbReference type="Pfam" id="PF01964">
    <property type="entry name" value="ThiC_Rad_SAM"/>
    <property type="match status" value="1"/>
</dbReference>
<dbReference type="SFLD" id="SFLDF00407">
    <property type="entry name" value="phosphomethylpyrimidine_syntha"/>
    <property type="match status" value="1"/>
</dbReference>
<dbReference type="SFLD" id="SFLDG01114">
    <property type="entry name" value="phosphomethylpyrimidine_syntha"/>
    <property type="match status" value="1"/>
</dbReference>
<dbReference type="SFLD" id="SFLDS00113">
    <property type="entry name" value="Radical_SAM_Phosphomethylpyrim"/>
    <property type="match status" value="1"/>
</dbReference>
<feature type="chain" id="PRO_0000242301" description="Phosphomethylpyrimidine synthase">
    <location>
        <begin position="1"/>
        <end position="631"/>
    </location>
</feature>
<feature type="binding site" evidence="1">
    <location>
        <position position="239"/>
    </location>
    <ligand>
        <name>substrate</name>
    </ligand>
</feature>
<feature type="binding site" evidence="1">
    <location>
        <position position="268"/>
    </location>
    <ligand>
        <name>substrate</name>
    </ligand>
</feature>
<feature type="binding site" evidence="1">
    <location>
        <position position="297"/>
    </location>
    <ligand>
        <name>substrate</name>
    </ligand>
</feature>
<feature type="binding site" evidence="1">
    <location>
        <position position="333"/>
    </location>
    <ligand>
        <name>substrate</name>
    </ligand>
</feature>
<feature type="binding site" evidence="1">
    <location>
        <begin position="353"/>
        <end position="355"/>
    </location>
    <ligand>
        <name>substrate</name>
    </ligand>
</feature>
<feature type="binding site" evidence="1">
    <location>
        <begin position="394"/>
        <end position="397"/>
    </location>
    <ligand>
        <name>substrate</name>
    </ligand>
</feature>
<feature type="binding site" evidence="1">
    <location>
        <position position="433"/>
    </location>
    <ligand>
        <name>substrate</name>
    </ligand>
</feature>
<feature type="binding site" evidence="1">
    <location>
        <position position="437"/>
    </location>
    <ligand>
        <name>Zn(2+)</name>
        <dbReference type="ChEBI" id="CHEBI:29105"/>
    </ligand>
</feature>
<feature type="binding site" evidence="1">
    <location>
        <position position="460"/>
    </location>
    <ligand>
        <name>substrate</name>
    </ligand>
</feature>
<feature type="binding site" evidence="1">
    <location>
        <position position="501"/>
    </location>
    <ligand>
        <name>Zn(2+)</name>
        <dbReference type="ChEBI" id="CHEBI:29105"/>
    </ligand>
</feature>
<feature type="binding site" evidence="1">
    <location>
        <position position="581"/>
    </location>
    <ligand>
        <name>[4Fe-4S] cluster</name>
        <dbReference type="ChEBI" id="CHEBI:49883"/>
        <note>4Fe-4S-S-AdoMet</note>
    </ligand>
</feature>
<feature type="binding site" evidence="1">
    <location>
        <position position="584"/>
    </location>
    <ligand>
        <name>[4Fe-4S] cluster</name>
        <dbReference type="ChEBI" id="CHEBI:49883"/>
        <note>4Fe-4S-S-AdoMet</note>
    </ligand>
</feature>
<feature type="binding site" evidence="1">
    <location>
        <position position="589"/>
    </location>
    <ligand>
        <name>[4Fe-4S] cluster</name>
        <dbReference type="ChEBI" id="CHEBI:49883"/>
        <note>4Fe-4S-S-AdoMet</note>
    </ligand>
</feature>
<organism>
    <name type="scientific">Salmonella paratyphi A (strain ATCC 9150 / SARB42)</name>
    <dbReference type="NCBI Taxonomy" id="295319"/>
    <lineage>
        <taxon>Bacteria</taxon>
        <taxon>Pseudomonadati</taxon>
        <taxon>Pseudomonadota</taxon>
        <taxon>Gammaproteobacteria</taxon>
        <taxon>Enterobacterales</taxon>
        <taxon>Enterobacteriaceae</taxon>
        <taxon>Salmonella</taxon>
    </lineage>
</organism>
<name>THIC_SALPA</name>
<sequence>MSTTTLTRREQRAKAQHFIDTLEGTAFPNSKRIYVTGSQHDIRVPMREIQLSPTLIGGSKDNPQFEENEAVPVYDTSGPYGDPEVAINVQQGLAKLRQPWIDARNDSEELDDRSSAYTRERLADDGLDDLRFTGLLTPKRAKAGHRVTQLHYARQGIVTPEMEFIAIRENMGRERIRSEVLRHQHPGMNFGARLPENITPEFVRDEVAAGRAIIPANINHPESEPMIIGRNFLVKVNANIGNSAVTSSIEEEVEKLVWSTRWGADTVMDLSTGRYIHETREWILRNSPVPIGTVPIYQALEKVNGIAEDLTWEAFRDTLLEQAEQGVDYFTIHAGVLLRYVPMTAKRLTGIVSRGGSIMAKWCLSHHKENFLFEHFREICEICAAYDVSLSLGDGLRPGSIQDANDEAQFSELHTLGELTKIAWEYDVQVMIEGPGHVPMHMIQRNMTEELESCHEAPFYTLGPLTTDIAPGYDHFTSGIGAAMIGWFGCAMLCYVTPKEHLGLPNKEDVKQGLITYKIAAHAADLAKGHPGAQIRDNAMSKARFEFRWEDQFNLALDPFTARAYHDETLPQESGKVAHFCSMCGPKFCSMKISQEVRDYAAAQTIEVGMADMSESFRAKGGEIYLKREEA</sequence>
<gene>
    <name evidence="1" type="primary">thiC</name>
    <name type="ordered locus">SPA4001</name>
</gene>
<proteinExistence type="inferred from homology"/>
<comment type="function">
    <text evidence="1">Catalyzes the synthesis of the hydroxymethylpyrimidine phosphate (HMP-P) moiety of thiamine from aminoimidazole ribotide (AIR) in a radical S-adenosyl-L-methionine (SAM)-dependent reaction.</text>
</comment>
<comment type="catalytic activity">
    <reaction evidence="1">
        <text>5-amino-1-(5-phospho-beta-D-ribosyl)imidazole + S-adenosyl-L-methionine = 4-amino-2-methyl-5-(phosphooxymethyl)pyrimidine + CO + 5'-deoxyadenosine + formate + L-methionine + 3 H(+)</text>
        <dbReference type="Rhea" id="RHEA:24840"/>
        <dbReference type="ChEBI" id="CHEBI:15378"/>
        <dbReference type="ChEBI" id="CHEBI:15740"/>
        <dbReference type="ChEBI" id="CHEBI:17245"/>
        <dbReference type="ChEBI" id="CHEBI:17319"/>
        <dbReference type="ChEBI" id="CHEBI:57844"/>
        <dbReference type="ChEBI" id="CHEBI:58354"/>
        <dbReference type="ChEBI" id="CHEBI:59789"/>
        <dbReference type="ChEBI" id="CHEBI:137981"/>
        <dbReference type="EC" id="4.1.99.17"/>
    </reaction>
</comment>
<comment type="cofactor">
    <cofactor evidence="1">
        <name>[4Fe-4S] cluster</name>
        <dbReference type="ChEBI" id="CHEBI:49883"/>
    </cofactor>
    <text evidence="1">Binds 1 [4Fe-4S] cluster per subunit. The cluster is coordinated with 3 cysteines and an exchangeable S-adenosyl-L-methionine.</text>
</comment>
<comment type="pathway">
    <text evidence="1">Cofactor biosynthesis; thiamine diphosphate biosynthesis.</text>
</comment>
<comment type="subunit">
    <text evidence="1">Homodimer.</text>
</comment>
<comment type="similarity">
    <text evidence="1">Belongs to the ThiC family.</text>
</comment>
<reference key="1">
    <citation type="journal article" date="2004" name="Nat. Genet.">
        <title>Comparison of genome degradation in Paratyphi A and Typhi, human-restricted serovars of Salmonella enterica that cause typhoid.</title>
        <authorList>
            <person name="McClelland M."/>
            <person name="Sanderson K.E."/>
            <person name="Clifton S.W."/>
            <person name="Latreille P."/>
            <person name="Porwollik S."/>
            <person name="Sabo A."/>
            <person name="Meyer R."/>
            <person name="Bieri T."/>
            <person name="Ozersky P."/>
            <person name="McLellan M."/>
            <person name="Harkins C.R."/>
            <person name="Wang C."/>
            <person name="Nguyen C."/>
            <person name="Berghoff A."/>
            <person name="Elliott G."/>
            <person name="Kohlberg S."/>
            <person name="Strong C."/>
            <person name="Du F."/>
            <person name="Carter J."/>
            <person name="Kremizki C."/>
            <person name="Layman D."/>
            <person name="Leonard S."/>
            <person name="Sun H."/>
            <person name="Fulton L."/>
            <person name="Nash W."/>
            <person name="Miner T."/>
            <person name="Minx P."/>
            <person name="Delehaunty K."/>
            <person name="Fronick C."/>
            <person name="Magrini V."/>
            <person name="Nhan M."/>
            <person name="Warren W."/>
            <person name="Florea L."/>
            <person name="Spieth J."/>
            <person name="Wilson R.K."/>
        </authorList>
    </citation>
    <scope>NUCLEOTIDE SEQUENCE [LARGE SCALE GENOMIC DNA]</scope>
    <source>
        <strain>ATCC 9150 / SARB42</strain>
    </source>
</reference>